<dbReference type="EMBL" id="M91266">
    <property type="protein sequence ID" value="AAA49247.1"/>
    <property type="molecule type" value="Genomic_DNA"/>
</dbReference>
<dbReference type="SMR" id="P28119"/>
<dbReference type="GlyCosmos" id="P28119">
    <property type="glycosylation" value="1 site, No reported glycans"/>
</dbReference>
<dbReference type="GO" id="GO:0005615">
    <property type="term" value="C:extracellular space"/>
    <property type="evidence" value="ECO:0007669"/>
    <property type="project" value="TreeGrafter"/>
</dbReference>
<dbReference type="GO" id="GO:0005125">
    <property type="term" value="F:cytokine activity"/>
    <property type="evidence" value="ECO:0007669"/>
    <property type="project" value="TreeGrafter"/>
</dbReference>
<dbReference type="GO" id="GO:0005109">
    <property type="term" value="F:frizzled binding"/>
    <property type="evidence" value="ECO:0007669"/>
    <property type="project" value="TreeGrafter"/>
</dbReference>
<dbReference type="GO" id="GO:0060070">
    <property type="term" value="P:canonical Wnt signaling pathway"/>
    <property type="evidence" value="ECO:0007669"/>
    <property type="project" value="TreeGrafter"/>
</dbReference>
<dbReference type="GO" id="GO:0045165">
    <property type="term" value="P:cell fate commitment"/>
    <property type="evidence" value="ECO:0007669"/>
    <property type="project" value="TreeGrafter"/>
</dbReference>
<dbReference type="GO" id="GO:0030182">
    <property type="term" value="P:neuron differentiation"/>
    <property type="evidence" value="ECO:0007669"/>
    <property type="project" value="TreeGrafter"/>
</dbReference>
<dbReference type="Gene3D" id="3.30.2460.20">
    <property type="match status" value="1"/>
</dbReference>
<dbReference type="InterPro" id="IPR005817">
    <property type="entry name" value="Wnt"/>
</dbReference>
<dbReference type="InterPro" id="IPR043158">
    <property type="entry name" value="Wnt_C"/>
</dbReference>
<dbReference type="PANTHER" id="PTHR12027:SF77">
    <property type="entry name" value="PROTEIN WNT-5"/>
    <property type="match status" value="1"/>
</dbReference>
<dbReference type="PANTHER" id="PTHR12027">
    <property type="entry name" value="WNT RELATED"/>
    <property type="match status" value="1"/>
</dbReference>
<dbReference type="Pfam" id="PF00110">
    <property type="entry name" value="wnt"/>
    <property type="match status" value="1"/>
</dbReference>
<dbReference type="SMART" id="SM00097">
    <property type="entry name" value="WNT1"/>
    <property type="match status" value="1"/>
</dbReference>
<protein>
    <recommendedName>
        <fullName>Protein Wnt-5(I)</fullName>
    </recommendedName>
</protein>
<sequence>SGSCSLKTCWMQLSPFREVGNRLKQKYDQAAAVRLARRRRLEPVNQRFSPPTKMDLVYLETSPDYCMRNDTTGAAGTAGRQCERGSAGTGGCELMCCGRGYDSFRATSTERCHCKF</sequence>
<gene>
    <name type="primary">WNT-5(I)</name>
</gene>
<reference key="1">
    <citation type="journal article" date="1992" name="Proc. Natl. Acad. Sci. U.S.A.">
        <title>Diversification of the Wnt gene family on the ancestral lineage of vertebrates.</title>
        <authorList>
            <person name="Sidow A."/>
        </authorList>
    </citation>
    <scope>NUCLEOTIDE SEQUENCE [GENOMIC DNA]</scope>
</reference>
<proteinExistence type="inferred from homology"/>
<evidence type="ECO:0000250" key="1">
    <source>
        <dbReference type="UniProtKB" id="P27467"/>
    </source>
</evidence>
<evidence type="ECO:0000250" key="2">
    <source>
        <dbReference type="UniProtKB" id="P28026"/>
    </source>
</evidence>
<evidence type="ECO:0000250" key="3">
    <source>
        <dbReference type="UniProtKB" id="P56704"/>
    </source>
</evidence>
<evidence type="ECO:0000255" key="4"/>
<evidence type="ECO:0000305" key="5"/>
<comment type="function">
    <text>Ligand for members of the frizzled family of seven transmembrane receptors. Probable developmental protein. May be a signaling molecule which affects the development of discrete regions of tissues. Is likely to signal over only few cell diameters.</text>
</comment>
<comment type="subcellular location">
    <subcellularLocation>
        <location>Secreted</location>
        <location>Extracellular space</location>
        <location>Extracellular matrix</location>
    </subcellularLocation>
</comment>
<comment type="PTM">
    <text evidence="1 3">Palmitoleoylation is required for efficient binding to frizzled receptors. Depalmitoleoylation leads to Wnt signaling pathway inhibition.</text>
</comment>
<comment type="similarity">
    <text evidence="5">Belongs to the Wnt family.</text>
</comment>
<organism>
    <name type="scientific">Eptatretus stoutii</name>
    <name type="common">Pacific hagfish</name>
    <dbReference type="NCBI Taxonomy" id="7765"/>
    <lineage>
        <taxon>Eukaryota</taxon>
        <taxon>Metazoa</taxon>
        <taxon>Chordata</taxon>
        <taxon>Craniata</taxon>
        <taxon>Vertebrata</taxon>
        <taxon>Cyclostomata</taxon>
        <taxon>Myxini</taxon>
        <taxon>Myxiniformes</taxon>
        <taxon>Myxinidae</taxon>
        <taxon>Eptatretinae</taxon>
        <taxon>Eptatretus</taxon>
    </lineage>
</organism>
<accession>P28119</accession>
<feature type="chain" id="PRO_0000200635" description="Protein Wnt-5(I)">
    <location>
        <begin position="1" status="less than"/>
        <end position="116" status="greater than"/>
    </location>
</feature>
<feature type="lipid moiety-binding region" description="O-palmitoleoyl serine; by PORCN" evidence="3">
    <location>
        <position position="1"/>
    </location>
</feature>
<feature type="glycosylation site" description="N-linked (GlcNAc...) asparagine" evidence="4">
    <location>
        <position position="69"/>
    </location>
</feature>
<feature type="disulfide bond" evidence="2">
    <location>
        <begin position="82"/>
        <end position="97"/>
    </location>
</feature>
<feature type="non-terminal residue">
    <location>
        <position position="1"/>
    </location>
</feature>
<feature type="non-terminal residue">
    <location>
        <position position="116"/>
    </location>
</feature>
<keyword id="KW-0217">Developmental protein</keyword>
<keyword id="KW-1015">Disulfide bond</keyword>
<keyword id="KW-0272">Extracellular matrix</keyword>
<keyword id="KW-0325">Glycoprotein</keyword>
<keyword id="KW-0449">Lipoprotein</keyword>
<keyword id="KW-0964">Secreted</keyword>
<keyword id="KW-0879">Wnt signaling pathway</keyword>
<name>WNT51_EPTST</name>